<keyword id="KW-0997">Cell inner membrane</keyword>
<keyword id="KW-1003">Cell membrane</keyword>
<keyword id="KW-0472">Membrane</keyword>
<keyword id="KW-0653">Protein transport</keyword>
<keyword id="KW-0811">Translocation</keyword>
<keyword id="KW-0812">Transmembrane</keyword>
<keyword id="KW-1133">Transmembrane helix</keyword>
<keyword id="KW-0813">Transport</keyword>
<reference key="1">
    <citation type="submission" date="2008-06" db="EMBL/GenBank/DDBJ databases">
        <title>Complete sequence of Chlorobium phaeobacteroides BS1.</title>
        <authorList>
            <consortium name="US DOE Joint Genome Institute"/>
            <person name="Lucas S."/>
            <person name="Copeland A."/>
            <person name="Lapidus A."/>
            <person name="Glavina del Rio T."/>
            <person name="Dalin E."/>
            <person name="Tice H."/>
            <person name="Bruce D."/>
            <person name="Goodwin L."/>
            <person name="Pitluck S."/>
            <person name="Schmutz J."/>
            <person name="Larimer F."/>
            <person name="Land M."/>
            <person name="Hauser L."/>
            <person name="Kyrpides N."/>
            <person name="Ovchinnikova G."/>
            <person name="Li T."/>
            <person name="Liu Z."/>
            <person name="Zhao F."/>
            <person name="Overmann J."/>
            <person name="Bryant D.A."/>
            <person name="Richardson P."/>
        </authorList>
    </citation>
    <scope>NUCLEOTIDE SEQUENCE [LARGE SCALE GENOMIC DNA]</scope>
    <source>
        <strain>BS1</strain>
    </source>
</reference>
<protein>
    <recommendedName>
        <fullName evidence="1">Sec-independent protein translocase protein TatA</fullName>
    </recommendedName>
</protein>
<comment type="function">
    <text evidence="1">Part of the twin-arginine translocation (Tat) system that transports large folded proteins containing a characteristic twin-arginine motif in their signal peptide across membranes. TatA could form the protein-conducting channel of the Tat system.</text>
</comment>
<comment type="subunit">
    <text evidence="1">Forms a complex with TatC.</text>
</comment>
<comment type="subcellular location">
    <subcellularLocation>
        <location evidence="1">Cell inner membrane</location>
        <topology evidence="1">Single-pass membrane protein</topology>
    </subcellularLocation>
</comment>
<comment type="similarity">
    <text evidence="1">Belongs to the TatA/E family.</text>
</comment>
<proteinExistence type="inferred from homology"/>
<evidence type="ECO:0000255" key="1">
    <source>
        <dbReference type="HAMAP-Rule" id="MF_00236"/>
    </source>
</evidence>
<evidence type="ECO:0000256" key="2">
    <source>
        <dbReference type="SAM" id="MobiDB-lite"/>
    </source>
</evidence>
<gene>
    <name evidence="1" type="primary">tatA</name>
    <name type="ordered locus">Cphamn1_0596</name>
</gene>
<accession>B3EMS7</accession>
<feature type="chain" id="PRO_1000197865" description="Sec-independent protein translocase protein TatA">
    <location>
        <begin position="1"/>
        <end position="69"/>
    </location>
</feature>
<feature type="transmembrane region" description="Helical" evidence="1">
    <location>
        <begin position="1"/>
        <end position="21"/>
    </location>
</feature>
<feature type="region of interest" description="Disordered" evidence="2">
    <location>
        <begin position="48"/>
        <end position="69"/>
    </location>
</feature>
<organism>
    <name type="scientific">Chlorobium phaeobacteroides (strain BS1)</name>
    <dbReference type="NCBI Taxonomy" id="331678"/>
    <lineage>
        <taxon>Bacteria</taxon>
        <taxon>Pseudomonadati</taxon>
        <taxon>Chlorobiota</taxon>
        <taxon>Chlorobiia</taxon>
        <taxon>Chlorobiales</taxon>
        <taxon>Chlorobiaceae</taxon>
        <taxon>Chlorobium/Pelodictyon group</taxon>
        <taxon>Chlorobium</taxon>
    </lineage>
</organism>
<name>TATA_CHLPB</name>
<dbReference type="EMBL" id="CP001101">
    <property type="protein sequence ID" value="ACE03555.1"/>
    <property type="molecule type" value="Genomic_DNA"/>
</dbReference>
<dbReference type="SMR" id="B3EMS7"/>
<dbReference type="STRING" id="331678.Cphamn1_0596"/>
<dbReference type="KEGG" id="cpb:Cphamn1_0596"/>
<dbReference type="eggNOG" id="COG1826">
    <property type="taxonomic scope" value="Bacteria"/>
</dbReference>
<dbReference type="HOGENOM" id="CLU_086034_6_2_10"/>
<dbReference type="OrthoDB" id="9812812at2"/>
<dbReference type="GO" id="GO:0033281">
    <property type="term" value="C:TAT protein transport complex"/>
    <property type="evidence" value="ECO:0007669"/>
    <property type="project" value="UniProtKB-UniRule"/>
</dbReference>
<dbReference type="GO" id="GO:0008320">
    <property type="term" value="F:protein transmembrane transporter activity"/>
    <property type="evidence" value="ECO:0007669"/>
    <property type="project" value="UniProtKB-UniRule"/>
</dbReference>
<dbReference type="GO" id="GO:0043953">
    <property type="term" value="P:protein transport by the Tat complex"/>
    <property type="evidence" value="ECO:0007669"/>
    <property type="project" value="UniProtKB-UniRule"/>
</dbReference>
<dbReference type="Gene3D" id="1.20.5.3310">
    <property type="match status" value="1"/>
</dbReference>
<dbReference type="HAMAP" id="MF_00236">
    <property type="entry name" value="TatA_E"/>
    <property type="match status" value="1"/>
</dbReference>
<dbReference type="InterPro" id="IPR003369">
    <property type="entry name" value="TatA/B/E"/>
</dbReference>
<dbReference type="InterPro" id="IPR006312">
    <property type="entry name" value="TatA/E"/>
</dbReference>
<dbReference type="NCBIfam" id="TIGR01411">
    <property type="entry name" value="tatAE"/>
    <property type="match status" value="1"/>
</dbReference>
<dbReference type="PANTHER" id="PTHR42982">
    <property type="entry name" value="SEC-INDEPENDENT PROTEIN TRANSLOCASE PROTEIN TATA"/>
    <property type="match status" value="1"/>
</dbReference>
<dbReference type="PANTHER" id="PTHR42982:SF1">
    <property type="entry name" value="SEC-INDEPENDENT PROTEIN TRANSLOCASE PROTEIN TATA"/>
    <property type="match status" value="1"/>
</dbReference>
<dbReference type="Pfam" id="PF02416">
    <property type="entry name" value="TatA_B_E"/>
    <property type="match status" value="1"/>
</dbReference>
<dbReference type="PRINTS" id="PR01506">
    <property type="entry name" value="TATBPROTEIN"/>
</dbReference>
<sequence length="69" mass="7575">MFGLGGQELVLILLIILLLFGAKKLPELAKGLGKGMKEFKKAQSEIEEELNKAVDDTPEKEKKSSSEKS</sequence>